<accession>C4ZWP8</accession>
<name>MAO1_ECOBW</name>
<gene>
    <name evidence="1" type="primary">maeA</name>
    <name type="ordered locus">BWG_1300</name>
</gene>
<comment type="catalytic activity">
    <reaction evidence="1">
        <text>(S)-malate + NAD(+) = pyruvate + CO2 + NADH</text>
        <dbReference type="Rhea" id="RHEA:12653"/>
        <dbReference type="ChEBI" id="CHEBI:15361"/>
        <dbReference type="ChEBI" id="CHEBI:15589"/>
        <dbReference type="ChEBI" id="CHEBI:16526"/>
        <dbReference type="ChEBI" id="CHEBI:57540"/>
        <dbReference type="ChEBI" id="CHEBI:57945"/>
        <dbReference type="EC" id="1.1.1.38"/>
    </reaction>
</comment>
<comment type="catalytic activity">
    <reaction evidence="1">
        <text>oxaloacetate + H(+) = pyruvate + CO2</text>
        <dbReference type="Rhea" id="RHEA:15641"/>
        <dbReference type="ChEBI" id="CHEBI:15361"/>
        <dbReference type="ChEBI" id="CHEBI:15378"/>
        <dbReference type="ChEBI" id="CHEBI:16452"/>
        <dbReference type="ChEBI" id="CHEBI:16526"/>
        <dbReference type="EC" id="1.1.1.38"/>
    </reaction>
</comment>
<comment type="cofactor">
    <cofactor evidence="1">
        <name>Mg(2+)</name>
        <dbReference type="ChEBI" id="CHEBI:18420"/>
    </cofactor>
    <cofactor evidence="1">
        <name>Mn(2+)</name>
        <dbReference type="ChEBI" id="CHEBI:29035"/>
    </cofactor>
    <text evidence="1">Divalent metal cations. Prefers magnesium or manganese.</text>
</comment>
<comment type="subunit">
    <text evidence="1">Homotetramer.</text>
</comment>
<comment type="similarity">
    <text evidence="1">Belongs to the malic enzymes family.</text>
</comment>
<organism>
    <name type="scientific">Escherichia coli (strain K12 / MC4100 / BW2952)</name>
    <dbReference type="NCBI Taxonomy" id="595496"/>
    <lineage>
        <taxon>Bacteria</taxon>
        <taxon>Pseudomonadati</taxon>
        <taxon>Pseudomonadota</taxon>
        <taxon>Gammaproteobacteria</taxon>
        <taxon>Enterobacterales</taxon>
        <taxon>Enterobacteriaceae</taxon>
        <taxon>Escherichia</taxon>
    </lineage>
</organism>
<dbReference type="EC" id="1.1.1.38" evidence="1"/>
<dbReference type="EMBL" id="CP001396">
    <property type="protein sequence ID" value="ACR63706.1"/>
    <property type="molecule type" value="Genomic_DNA"/>
</dbReference>
<dbReference type="RefSeq" id="WP_000433476.1">
    <property type="nucleotide sequence ID" value="NC_012759.1"/>
</dbReference>
<dbReference type="SMR" id="C4ZWP8"/>
<dbReference type="KEGG" id="ebw:BWG_1300"/>
<dbReference type="HOGENOM" id="CLU_011405_5_2_6"/>
<dbReference type="GO" id="GO:0005829">
    <property type="term" value="C:cytosol"/>
    <property type="evidence" value="ECO:0007669"/>
    <property type="project" value="TreeGrafter"/>
</dbReference>
<dbReference type="GO" id="GO:0004471">
    <property type="term" value="F:malate dehydrogenase (decarboxylating) (NAD+) activity"/>
    <property type="evidence" value="ECO:0007669"/>
    <property type="project" value="UniProtKB-UniRule"/>
</dbReference>
<dbReference type="GO" id="GO:0046872">
    <property type="term" value="F:metal ion binding"/>
    <property type="evidence" value="ECO:0007669"/>
    <property type="project" value="UniProtKB-KW"/>
</dbReference>
<dbReference type="GO" id="GO:0051287">
    <property type="term" value="F:NAD binding"/>
    <property type="evidence" value="ECO:0007669"/>
    <property type="project" value="InterPro"/>
</dbReference>
<dbReference type="GO" id="GO:0008948">
    <property type="term" value="F:oxaloacetate decarboxylase activity"/>
    <property type="evidence" value="ECO:0007669"/>
    <property type="project" value="UniProtKB-UniRule"/>
</dbReference>
<dbReference type="GO" id="GO:0006108">
    <property type="term" value="P:malate metabolic process"/>
    <property type="evidence" value="ECO:0007669"/>
    <property type="project" value="TreeGrafter"/>
</dbReference>
<dbReference type="CDD" id="cd05312">
    <property type="entry name" value="NAD_bind_1_malic_enz"/>
    <property type="match status" value="1"/>
</dbReference>
<dbReference type="FunFam" id="3.40.50.10380:FF:000001">
    <property type="entry name" value="NAD-dependent malic enzyme"/>
    <property type="match status" value="1"/>
</dbReference>
<dbReference type="FunFam" id="3.40.50.720:FF:000055">
    <property type="entry name" value="NAD-dependent malic enzyme"/>
    <property type="match status" value="1"/>
</dbReference>
<dbReference type="Gene3D" id="3.40.50.10380">
    <property type="entry name" value="Malic enzyme, N-terminal domain"/>
    <property type="match status" value="1"/>
</dbReference>
<dbReference type="Gene3D" id="3.40.50.720">
    <property type="entry name" value="NAD(P)-binding Rossmann-like Domain"/>
    <property type="match status" value="1"/>
</dbReference>
<dbReference type="HAMAP" id="MF_01619">
    <property type="entry name" value="NAD_malic_enz"/>
    <property type="match status" value="1"/>
</dbReference>
<dbReference type="InterPro" id="IPR046346">
    <property type="entry name" value="Aminoacid_DH-like_N_sf"/>
</dbReference>
<dbReference type="InterPro" id="IPR015884">
    <property type="entry name" value="Malic_enzyme_CS"/>
</dbReference>
<dbReference type="InterPro" id="IPR012301">
    <property type="entry name" value="Malic_N_dom"/>
</dbReference>
<dbReference type="InterPro" id="IPR037062">
    <property type="entry name" value="Malic_N_dom_sf"/>
</dbReference>
<dbReference type="InterPro" id="IPR012302">
    <property type="entry name" value="Malic_NAD-bd"/>
</dbReference>
<dbReference type="InterPro" id="IPR001891">
    <property type="entry name" value="Malic_OxRdtase"/>
</dbReference>
<dbReference type="InterPro" id="IPR036291">
    <property type="entry name" value="NAD(P)-bd_dom_sf"/>
</dbReference>
<dbReference type="InterPro" id="IPR023667">
    <property type="entry name" value="NAD_malic_enz_proteobac"/>
</dbReference>
<dbReference type="NCBIfam" id="NF010052">
    <property type="entry name" value="PRK13529.1"/>
    <property type="match status" value="1"/>
</dbReference>
<dbReference type="PANTHER" id="PTHR23406">
    <property type="entry name" value="MALIC ENZYME-RELATED"/>
    <property type="match status" value="1"/>
</dbReference>
<dbReference type="PANTHER" id="PTHR23406:SF34">
    <property type="entry name" value="NAD-DEPENDENT MALIC ENZYME, MITOCHONDRIAL"/>
    <property type="match status" value="1"/>
</dbReference>
<dbReference type="Pfam" id="PF00390">
    <property type="entry name" value="malic"/>
    <property type="match status" value="1"/>
</dbReference>
<dbReference type="Pfam" id="PF03949">
    <property type="entry name" value="Malic_M"/>
    <property type="match status" value="1"/>
</dbReference>
<dbReference type="PIRSF" id="PIRSF000106">
    <property type="entry name" value="ME"/>
    <property type="match status" value="1"/>
</dbReference>
<dbReference type="PRINTS" id="PR00072">
    <property type="entry name" value="MALOXRDTASE"/>
</dbReference>
<dbReference type="SMART" id="SM01274">
    <property type="entry name" value="malic"/>
    <property type="match status" value="1"/>
</dbReference>
<dbReference type="SMART" id="SM00919">
    <property type="entry name" value="Malic_M"/>
    <property type="match status" value="1"/>
</dbReference>
<dbReference type="SUPFAM" id="SSF53223">
    <property type="entry name" value="Aminoacid dehydrogenase-like, N-terminal domain"/>
    <property type="match status" value="1"/>
</dbReference>
<dbReference type="SUPFAM" id="SSF51735">
    <property type="entry name" value="NAD(P)-binding Rossmann-fold domains"/>
    <property type="match status" value="1"/>
</dbReference>
<dbReference type="PROSITE" id="PS00331">
    <property type="entry name" value="MALIC_ENZYMES"/>
    <property type="match status" value="1"/>
</dbReference>
<reference key="1">
    <citation type="journal article" date="2009" name="J. Bacteriol.">
        <title>Genomic sequencing reveals regulatory mutations and recombinational events in the widely used MC4100 lineage of Escherichia coli K-12.</title>
        <authorList>
            <person name="Ferenci T."/>
            <person name="Zhou Z."/>
            <person name="Betteridge T."/>
            <person name="Ren Y."/>
            <person name="Liu Y."/>
            <person name="Feng L."/>
            <person name="Reeves P.R."/>
            <person name="Wang L."/>
        </authorList>
    </citation>
    <scope>NUCLEOTIDE SEQUENCE [LARGE SCALE GENOMIC DNA]</scope>
    <source>
        <strain>K12 / MC4100 / BW2952</strain>
    </source>
</reference>
<proteinExistence type="inferred from homology"/>
<protein>
    <recommendedName>
        <fullName evidence="1">NAD-dependent malic enzyme</fullName>
        <shortName evidence="1">NAD-ME</shortName>
        <ecNumber evidence="1">1.1.1.38</ecNumber>
    </recommendedName>
</protein>
<keyword id="KW-0479">Metal-binding</keyword>
<keyword id="KW-0520">NAD</keyword>
<keyword id="KW-0560">Oxidoreductase</keyword>
<evidence type="ECO:0000255" key="1">
    <source>
        <dbReference type="HAMAP-Rule" id="MF_01619"/>
    </source>
</evidence>
<feature type="chain" id="PRO_1000215734" description="NAD-dependent malic enzyme">
    <location>
        <begin position="1"/>
        <end position="565"/>
    </location>
</feature>
<feature type="active site" description="Proton donor" evidence="1">
    <location>
        <position position="104"/>
    </location>
</feature>
<feature type="active site" description="Proton acceptor" evidence="1">
    <location>
        <position position="175"/>
    </location>
</feature>
<feature type="binding site" evidence="1">
    <location>
        <position position="157"/>
    </location>
    <ligand>
        <name>NAD(+)</name>
        <dbReference type="ChEBI" id="CHEBI:57540"/>
    </ligand>
</feature>
<feature type="binding site" evidence="1">
    <location>
        <position position="246"/>
    </location>
    <ligand>
        <name>a divalent metal cation</name>
        <dbReference type="ChEBI" id="CHEBI:60240"/>
    </ligand>
</feature>
<feature type="binding site" evidence="1">
    <location>
        <position position="247"/>
    </location>
    <ligand>
        <name>a divalent metal cation</name>
        <dbReference type="ChEBI" id="CHEBI:60240"/>
    </ligand>
</feature>
<feature type="binding site" evidence="1">
    <location>
        <position position="270"/>
    </location>
    <ligand>
        <name>a divalent metal cation</name>
        <dbReference type="ChEBI" id="CHEBI:60240"/>
    </ligand>
</feature>
<feature type="binding site" evidence="1">
    <location>
        <position position="270"/>
    </location>
    <ligand>
        <name>NAD(+)</name>
        <dbReference type="ChEBI" id="CHEBI:57540"/>
    </ligand>
</feature>
<feature type="binding site" evidence="1">
    <location>
        <position position="418"/>
    </location>
    <ligand>
        <name>NAD(+)</name>
        <dbReference type="ChEBI" id="CHEBI:57540"/>
    </ligand>
</feature>
<feature type="site" description="Important for activity" evidence="1">
    <location>
        <position position="270"/>
    </location>
</feature>
<sequence>MEPKTKKQRSLYIPYAGPVLLEFPLLNKGSAFSMEERRNFNLLGLLPEVVETIEEQAERAWIQYQGFKTEIDKHIYLRNIQDTNETLFYRLVNNHLDEMMPVIYTPTVGAACERFSEIYRRSRGVFISYQNRHNMDDILQNVPNHNIKVIVVTDGERILGLGDQGIGGMGIPIGKLSLYTACGGISPAYTLPVVLDVGTNNQQLLNDPLYMGWRNPRITDDEYYEFVDEFIQAVKQRWPDVLLQFEDFAQKNAMPLLNRYRNEICSFNDDIQGTAAVTVGTLIAASRAAGGQLSEKKIVFLGAGSAGCGIAEMIISQTQREGLSEEAARQKVFMVDRFGLLTDKMPNLLPFQTKLVQKRENLSDWDTDSDVLSLLDVVRNVKPDILIGVSGQTGLFTEEIIREMHKHCPRPIVMPLSNPTSRVEATPQDIIAWTEGNALVATGSPFNPVVWKDKIYPIAQCNNAFIFPGIGLGVIASGASRITDEMLMSASETLAQYSPLVLNGEGMVLPELKDIQKVSRAIAFAVGKMAQQQGVAVKTSAEALQQAIDDNFWQAEYRDYRRTSI</sequence>